<accession>A5CYE1</accession>
<sequence>MSDKTQRLEIVTPQRKVFSEDVSFLVAPGTEGELGVLPNHAPLITSLNIGIMRIQQEGKTFKVVVTGGFMEVRDNKVTVLANAAERAEEIDVARAEAARRRAEERLAKKTPDIDVLRAELALKRALTRLKAAGQ</sequence>
<protein>
    <recommendedName>
        <fullName evidence="1">ATP synthase epsilon chain</fullName>
    </recommendedName>
    <alternativeName>
        <fullName evidence="1">ATP synthase F1 sector epsilon subunit</fullName>
    </alternativeName>
    <alternativeName>
        <fullName evidence="1">F-ATPase epsilon subunit</fullName>
    </alternativeName>
</protein>
<keyword id="KW-0066">ATP synthesis</keyword>
<keyword id="KW-1003">Cell membrane</keyword>
<keyword id="KW-0139">CF(1)</keyword>
<keyword id="KW-0375">Hydrogen ion transport</keyword>
<keyword id="KW-0406">Ion transport</keyword>
<keyword id="KW-0472">Membrane</keyword>
<keyword id="KW-1185">Reference proteome</keyword>
<keyword id="KW-0813">Transport</keyword>
<evidence type="ECO:0000255" key="1">
    <source>
        <dbReference type="HAMAP-Rule" id="MF_00530"/>
    </source>
</evidence>
<gene>
    <name evidence="1" type="primary">atpC</name>
    <name type="ordered locus">PTH_2811</name>
</gene>
<name>ATPE_PELTS</name>
<organism>
    <name type="scientific">Pelotomaculum thermopropionicum (strain DSM 13744 / JCM 10971 / SI)</name>
    <dbReference type="NCBI Taxonomy" id="370438"/>
    <lineage>
        <taxon>Bacteria</taxon>
        <taxon>Bacillati</taxon>
        <taxon>Bacillota</taxon>
        <taxon>Clostridia</taxon>
        <taxon>Eubacteriales</taxon>
        <taxon>Desulfotomaculaceae</taxon>
        <taxon>Pelotomaculum</taxon>
    </lineage>
</organism>
<comment type="function">
    <text evidence="1">Produces ATP from ADP in the presence of a proton gradient across the membrane.</text>
</comment>
<comment type="subunit">
    <text evidence="1">F-type ATPases have 2 components, CF(1) - the catalytic core - and CF(0) - the membrane proton channel. CF(1) has five subunits: alpha(3), beta(3), gamma(1), delta(1), epsilon(1). CF(0) has three main subunits: a, b and c.</text>
</comment>
<comment type="subcellular location">
    <subcellularLocation>
        <location evidence="1">Cell membrane</location>
        <topology evidence="1">Peripheral membrane protein</topology>
    </subcellularLocation>
</comment>
<comment type="similarity">
    <text evidence="1">Belongs to the ATPase epsilon chain family.</text>
</comment>
<reference key="1">
    <citation type="journal article" date="2008" name="Genome Res.">
        <title>The genome of Pelotomaculum thermopropionicum reveals niche-associated evolution in anaerobic microbiota.</title>
        <authorList>
            <person name="Kosaka T."/>
            <person name="Kato S."/>
            <person name="Shimoyama T."/>
            <person name="Ishii S."/>
            <person name="Abe T."/>
            <person name="Watanabe K."/>
        </authorList>
    </citation>
    <scope>NUCLEOTIDE SEQUENCE [LARGE SCALE GENOMIC DNA]</scope>
    <source>
        <strain>DSM 13744 / JCM 10971 / SI</strain>
    </source>
</reference>
<feature type="chain" id="PRO_1000127875" description="ATP synthase epsilon chain">
    <location>
        <begin position="1"/>
        <end position="134"/>
    </location>
</feature>
<proteinExistence type="inferred from homology"/>
<dbReference type="EMBL" id="AP009389">
    <property type="protein sequence ID" value="BAF60992.1"/>
    <property type="molecule type" value="Genomic_DNA"/>
</dbReference>
<dbReference type="SMR" id="A5CYE1"/>
<dbReference type="STRING" id="370438.PTH_2811"/>
<dbReference type="KEGG" id="pth:PTH_2811"/>
<dbReference type="eggNOG" id="COG0355">
    <property type="taxonomic scope" value="Bacteria"/>
</dbReference>
<dbReference type="HOGENOM" id="CLU_084338_1_3_9"/>
<dbReference type="Proteomes" id="UP000006556">
    <property type="component" value="Chromosome"/>
</dbReference>
<dbReference type="GO" id="GO:0005886">
    <property type="term" value="C:plasma membrane"/>
    <property type="evidence" value="ECO:0007669"/>
    <property type="project" value="UniProtKB-SubCell"/>
</dbReference>
<dbReference type="GO" id="GO:0045259">
    <property type="term" value="C:proton-transporting ATP synthase complex"/>
    <property type="evidence" value="ECO:0007669"/>
    <property type="project" value="UniProtKB-KW"/>
</dbReference>
<dbReference type="GO" id="GO:0005524">
    <property type="term" value="F:ATP binding"/>
    <property type="evidence" value="ECO:0007669"/>
    <property type="project" value="UniProtKB-UniRule"/>
</dbReference>
<dbReference type="GO" id="GO:0046933">
    <property type="term" value="F:proton-transporting ATP synthase activity, rotational mechanism"/>
    <property type="evidence" value="ECO:0007669"/>
    <property type="project" value="UniProtKB-UniRule"/>
</dbReference>
<dbReference type="CDD" id="cd12152">
    <property type="entry name" value="F1-ATPase_delta"/>
    <property type="match status" value="1"/>
</dbReference>
<dbReference type="FunFam" id="2.60.15.10:FF:000001">
    <property type="entry name" value="ATP synthase epsilon chain"/>
    <property type="match status" value="1"/>
</dbReference>
<dbReference type="Gene3D" id="1.20.5.440">
    <property type="entry name" value="ATP synthase delta/epsilon subunit, C-terminal domain"/>
    <property type="match status" value="1"/>
</dbReference>
<dbReference type="Gene3D" id="2.60.15.10">
    <property type="entry name" value="F0F1 ATP synthase delta/epsilon subunit, N-terminal"/>
    <property type="match status" value="1"/>
</dbReference>
<dbReference type="HAMAP" id="MF_00530">
    <property type="entry name" value="ATP_synth_epsil_bac"/>
    <property type="match status" value="1"/>
</dbReference>
<dbReference type="InterPro" id="IPR036794">
    <property type="entry name" value="ATP_F1_dsu/esu_C_sf"/>
</dbReference>
<dbReference type="InterPro" id="IPR001469">
    <property type="entry name" value="ATP_synth_F1_dsu/esu"/>
</dbReference>
<dbReference type="InterPro" id="IPR020546">
    <property type="entry name" value="ATP_synth_F1_dsu/esu_N"/>
</dbReference>
<dbReference type="InterPro" id="IPR020547">
    <property type="entry name" value="ATP_synth_F1_esu_C"/>
</dbReference>
<dbReference type="InterPro" id="IPR036771">
    <property type="entry name" value="ATPsynth_dsu/esu_N"/>
</dbReference>
<dbReference type="NCBIfam" id="TIGR01216">
    <property type="entry name" value="ATP_synt_epsi"/>
    <property type="match status" value="1"/>
</dbReference>
<dbReference type="NCBIfam" id="NF001846">
    <property type="entry name" value="PRK00571.1-3"/>
    <property type="match status" value="1"/>
</dbReference>
<dbReference type="NCBIfam" id="NF009980">
    <property type="entry name" value="PRK13446.1"/>
    <property type="match status" value="1"/>
</dbReference>
<dbReference type="PANTHER" id="PTHR13822">
    <property type="entry name" value="ATP SYNTHASE DELTA/EPSILON CHAIN"/>
    <property type="match status" value="1"/>
</dbReference>
<dbReference type="PANTHER" id="PTHR13822:SF10">
    <property type="entry name" value="ATP SYNTHASE EPSILON CHAIN, CHLOROPLASTIC"/>
    <property type="match status" value="1"/>
</dbReference>
<dbReference type="Pfam" id="PF00401">
    <property type="entry name" value="ATP-synt_DE"/>
    <property type="match status" value="1"/>
</dbReference>
<dbReference type="Pfam" id="PF02823">
    <property type="entry name" value="ATP-synt_DE_N"/>
    <property type="match status" value="1"/>
</dbReference>
<dbReference type="SUPFAM" id="SSF46604">
    <property type="entry name" value="Epsilon subunit of F1F0-ATP synthase C-terminal domain"/>
    <property type="match status" value="1"/>
</dbReference>
<dbReference type="SUPFAM" id="SSF51344">
    <property type="entry name" value="Epsilon subunit of F1F0-ATP synthase N-terminal domain"/>
    <property type="match status" value="1"/>
</dbReference>